<keyword id="KW-0150">Chloroplast</keyword>
<keyword id="KW-0249">Electron transport</keyword>
<keyword id="KW-0472">Membrane</keyword>
<keyword id="KW-0602">Photosynthesis</keyword>
<keyword id="KW-0934">Plastid</keyword>
<keyword id="KW-0793">Thylakoid</keyword>
<keyword id="KW-0812">Transmembrane</keyword>
<keyword id="KW-1133">Transmembrane helix</keyword>
<keyword id="KW-0813">Transport</keyword>
<sequence length="31" mass="3444">MLTITSYFGFLLAALTITSVLFIGLNKIRLI</sequence>
<accession>Q09FU3</accession>
<geneLocation type="chloroplast"/>
<proteinExistence type="inferred from homology"/>
<feature type="chain" id="PRO_0000278085" description="Cytochrome b6-f complex subunit 6">
    <location>
        <begin position="1"/>
        <end position="31"/>
    </location>
</feature>
<feature type="transmembrane region" description="Helical" evidence="1">
    <location>
        <begin position="4"/>
        <end position="24"/>
    </location>
</feature>
<gene>
    <name evidence="1" type="primary">petL</name>
</gene>
<protein>
    <recommendedName>
        <fullName evidence="1">Cytochrome b6-f complex subunit 6</fullName>
    </recommendedName>
    <alternativeName>
        <fullName evidence="1">Cytochrome b6-f complex subunit PetL</fullName>
    </alternativeName>
    <alternativeName>
        <fullName evidence="1">Cytochrome b6-f complex subunit VI</fullName>
    </alternativeName>
</protein>
<name>PETL_NANDO</name>
<comment type="function">
    <text evidence="1">Component of the cytochrome b6-f complex, which mediates electron transfer between photosystem II (PSII) and photosystem I (PSI), cyclic electron flow around PSI, and state transitions. PetL is important for photoautotrophic growth as well as for electron transfer efficiency and stability of the cytochrome b6-f complex.</text>
</comment>
<comment type="subunit">
    <text evidence="1">The 4 large subunits of the cytochrome b6-f complex are cytochrome b6, subunit IV (17 kDa polypeptide, PetD), cytochrome f and the Rieske protein, while the 4 small subunits are PetG, PetL, PetM and PetN. The complex functions as a dimer.</text>
</comment>
<comment type="subcellular location">
    <subcellularLocation>
        <location evidence="1">Plastid</location>
        <location evidence="1">Chloroplast thylakoid membrane</location>
        <topology evidence="1">Single-pass membrane protein</topology>
    </subcellularLocation>
</comment>
<comment type="similarity">
    <text evidence="1">Belongs to the PetL family.</text>
</comment>
<dbReference type="EMBL" id="DQ923117">
    <property type="protein sequence ID" value="ABI49881.1"/>
    <property type="molecule type" value="Genomic_DNA"/>
</dbReference>
<dbReference type="RefSeq" id="YP_740668.1">
    <property type="nucleotide sequence ID" value="NC_008336.1"/>
</dbReference>
<dbReference type="SMR" id="Q09FU3"/>
<dbReference type="GeneID" id="4271614"/>
<dbReference type="GO" id="GO:0009535">
    <property type="term" value="C:chloroplast thylakoid membrane"/>
    <property type="evidence" value="ECO:0007669"/>
    <property type="project" value="UniProtKB-SubCell"/>
</dbReference>
<dbReference type="GO" id="GO:0009512">
    <property type="term" value="C:cytochrome b6f complex"/>
    <property type="evidence" value="ECO:0007669"/>
    <property type="project" value="InterPro"/>
</dbReference>
<dbReference type="GO" id="GO:0045158">
    <property type="term" value="F:electron transporter, transferring electrons within cytochrome b6/f complex of photosystem II activity"/>
    <property type="evidence" value="ECO:0007669"/>
    <property type="project" value="UniProtKB-UniRule"/>
</dbReference>
<dbReference type="GO" id="GO:0015979">
    <property type="term" value="P:photosynthesis"/>
    <property type="evidence" value="ECO:0007669"/>
    <property type="project" value="UniProtKB-KW"/>
</dbReference>
<dbReference type="HAMAP" id="MF_00433">
    <property type="entry name" value="Cytb6_f_PetL"/>
    <property type="match status" value="1"/>
</dbReference>
<dbReference type="InterPro" id="IPR007802">
    <property type="entry name" value="Cyt_b6/f_cplx_su6"/>
</dbReference>
<dbReference type="PANTHER" id="PTHR37266">
    <property type="entry name" value="CYTOCHROME B6-F COMPLEX SUBUNIT 6"/>
    <property type="match status" value="1"/>
</dbReference>
<dbReference type="PANTHER" id="PTHR37266:SF1">
    <property type="entry name" value="CYTOCHROME B6-F COMPLEX SUBUNIT 6"/>
    <property type="match status" value="1"/>
</dbReference>
<dbReference type="Pfam" id="PF05115">
    <property type="entry name" value="PetL"/>
    <property type="match status" value="1"/>
</dbReference>
<dbReference type="SUPFAM" id="SSF103436">
    <property type="entry name" value="PetL subunit of the cytochrome b6f complex"/>
    <property type="match status" value="1"/>
</dbReference>
<organism>
    <name type="scientific">Nandina domestica</name>
    <name type="common">Heavenly bamboo</name>
    <dbReference type="NCBI Taxonomy" id="41776"/>
    <lineage>
        <taxon>Eukaryota</taxon>
        <taxon>Viridiplantae</taxon>
        <taxon>Streptophyta</taxon>
        <taxon>Embryophyta</taxon>
        <taxon>Tracheophyta</taxon>
        <taxon>Spermatophyta</taxon>
        <taxon>Magnoliopsida</taxon>
        <taxon>Ranunculales</taxon>
        <taxon>Berberidaceae</taxon>
        <taxon>Nandinoideae</taxon>
        <taxon>Nandineae</taxon>
        <taxon>Nandina</taxon>
    </lineage>
</organism>
<reference key="1">
    <citation type="journal article" date="2006" name="BMC Plant Biol.">
        <title>Rapid and accurate pyrosequencing of angiosperm plastid genomes.</title>
        <authorList>
            <person name="Moore M.J."/>
            <person name="Dhingra A."/>
            <person name="Soltis P.S."/>
            <person name="Shaw R."/>
            <person name="Farmerie W.G."/>
            <person name="Folta K.M."/>
            <person name="Soltis D.E."/>
        </authorList>
    </citation>
    <scope>NUCLEOTIDE SEQUENCE [LARGE SCALE GENOMIC DNA]</scope>
</reference>
<evidence type="ECO:0000255" key="1">
    <source>
        <dbReference type="HAMAP-Rule" id="MF_00433"/>
    </source>
</evidence>